<feature type="chain" id="PRO_0000370153" description="8-amino-3,8-dideoxy-manno-octulosonate cytidylyltransferase">
    <location>
        <begin position="1"/>
        <end position="245"/>
    </location>
</feature>
<keyword id="KW-0963">Cytoplasm</keyword>
<keyword id="KW-0448">Lipopolysaccharide biosynthesis</keyword>
<keyword id="KW-0548">Nucleotidyltransferase</keyword>
<keyword id="KW-1185">Reference proteome</keyword>
<keyword id="KW-0808">Transferase</keyword>
<reference key="1">
    <citation type="submission" date="2007-10" db="EMBL/GenBank/DDBJ databases">
        <title>Complete sequence of Shewanella pealeana ATCC 700345.</title>
        <authorList>
            <consortium name="US DOE Joint Genome Institute"/>
            <person name="Copeland A."/>
            <person name="Lucas S."/>
            <person name="Lapidus A."/>
            <person name="Barry K."/>
            <person name="Glavina del Rio T."/>
            <person name="Dalin E."/>
            <person name="Tice H."/>
            <person name="Pitluck S."/>
            <person name="Chertkov O."/>
            <person name="Brettin T."/>
            <person name="Bruce D."/>
            <person name="Detter J.C."/>
            <person name="Han C."/>
            <person name="Schmutz J."/>
            <person name="Larimer F."/>
            <person name="Land M."/>
            <person name="Hauser L."/>
            <person name="Kyrpides N."/>
            <person name="Kim E."/>
            <person name="Zhao J.-S.Z."/>
            <person name="Manno D."/>
            <person name="Hawari J."/>
            <person name="Richardson P."/>
        </authorList>
    </citation>
    <scope>NUCLEOTIDE SEQUENCE [LARGE SCALE GENOMIC DNA]</scope>
    <source>
        <strain>ATCC 700345 / ANG-SQ1</strain>
    </source>
</reference>
<gene>
    <name evidence="1" type="primary">kdsB</name>
    <name type="ordered locus">Spea_1985</name>
</gene>
<protein>
    <recommendedName>
        <fullName evidence="1">8-amino-3,8-dideoxy-manno-octulosonate cytidylyltransferase</fullName>
        <ecNumber evidence="1">2.7.7.90</ecNumber>
    </recommendedName>
    <alternativeName>
        <fullName evidence="1">CMP-8-amino-3,8-dideoxy-manno-octulosonate synthase</fullName>
    </alternativeName>
</protein>
<organism>
    <name type="scientific">Shewanella pealeana (strain ATCC 700345 / ANG-SQ1)</name>
    <dbReference type="NCBI Taxonomy" id="398579"/>
    <lineage>
        <taxon>Bacteria</taxon>
        <taxon>Pseudomonadati</taxon>
        <taxon>Pseudomonadota</taxon>
        <taxon>Gammaproteobacteria</taxon>
        <taxon>Alteromonadales</taxon>
        <taxon>Shewanellaceae</taxon>
        <taxon>Shewanella</taxon>
    </lineage>
</organism>
<comment type="function">
    <text evidence="1">Activates KDO8N (a required 8-carbon sugar) for incorporation into bacterial lipopolysaccharide in the Shewanella genus.</text>
</comment>
<comment type="catalytic activity">
    <reaction evidence="1">
        <text>8-amino-3,8-dideoxy-alpha-D-manno-octulosonate + CTP = CMP-8-amino-3,8-dideoxy-alpha-D-manno-oct-2-ulosonate + diphosphate</text>
        <dbReference type="Rhea" id="RHEA:49284"/>
        <dbReference type="ChEBI" id="CHEBI:33019"/>
        <dbReference type="ChEBI" id="CHEBI:37563"/>
        <dbReference type="ChEBI" id="CHEBI:87091"/>
        <dbReference type="ChEBI" id="CHEBI:91089"/>
        <dbReference type="EC" id="2.7.7.90"/>
    </reaction>
</comment>
<comment type="pathway">
    <text evidence="1">Bacterial outer membrane biogenesis; lipopolysaccharide biosynthesis.</text>
</comment>
<comment type="subcellular location">
    <subcellularLocation>
        <location evidence="1">Cytoplasm</location>
    </subcellularLocation>
</comment>
<comment type="similarity">
    <text evidence="1">Belongs to the KdsB family.</text>
</comment>
<sequence length="245" mass="27393">MNVTLLIPARYGSSRFPGKPLAHINGKPMIQHVYERASLAKGLKDIYVATDDVRIKNAVESFGGKVVMTGENAASGTDRIDEAISILGLADDDLVINLQGDQPLIDPIVIEQLVSVCERHAGEFDMATLGVEIKDEAQLNDPNHVKVVFDNNHNALYFSRARIPFGRDTSDYPVYKHIGIYAYTRKFIQTFAKLPLGRLEELEKLEQLRALEYGYKIKVAISAFDFPEVDTPEDIRICEARLTVD</sequence>
<accession>A8H420</accession>
<evidence type="ECO:0000255" key="1">
    <source>
        <dbReference type="HAMAP-Rule" id="MF_00057"/>
    </source>
</evidence>
<dbReference type="EC" id="2.7.7.90" evidence="1"/>
<dbReference type="EMBL" id="CP000851">
    <property type="protein sequence ID" value="ABV87307.1"/>
    <property type="molecule type" value="Genomic_DNA"/>
</dbReference>
<dbReference type="RefSeq" id="WP_012155223.1">
    <property type="nucleotide sequence ID" value="NC_009901.1"/>
</dbReference>
<dbReference type="SMR" id="A8H420"/>
<dbReference type="STRING" id="398579.Spea_1985"/>
<dbReference type="KEGG" id="spl:Spea_1985"/>
<dbReference type="eggNOG" id="COG1212">
    <property type="taxonomic scope" value="Bacteria"/>
</dbReference>
<dbReference type="HOGENOM" id="CLU_065038_0_1_6"/>
<dbReference type="OrthoDB" id="9815559at2"/>
<dbReference type="UniPathway" id="UPA00030"/>
<dbReference type="Proteomes" id="UP000002608">
    <property type="component" value="Chromosome"/>
</dbReference>
<dbReference type="GO" id="GO:0005829">
    <property type="term" value="C:cytosol"/>
    <property type="evidence" value="ECO:0007669"/>
    <property type="project" value="TreeGrafter"/>
</dbReference>
<dbReference type="GO" id="GO:0008690">
    <property type="term" value="F:3-deoxy-manno-octulosonate cytidylyltransferase activity"/>
    <property type="evidence" value="ECO:0007669"/>
    <property type="project" value="InterPro"/>
</dbReference>
<dbReference type="GO" id="GO:0009103">
    <property type="term" value="P:lipopolysaccharide biosynthetic process"/>
    <property type="evidence" value="ECO:0007669"/>
    <property type="project" value="UniProtKB-UniRule"/>
</dbReference>
<dbReference type="CDD" id="cd02517">
    <property type="entry name" value="CMP-KDO-Synthetase"/>
    <property type="match status" value="1"/>
</dbReference>
<dbReference type="FunFam" id="3.90.550.10:FF:000011">
    <property type="entry name" value="3-deoxy-manno-octulosonate cytidylyltransferase"/>
    <property type="match status" value="1"/>
</dbReference>
<dbReference type="Gene3D" id="3.90.550.10">
    <property type="entry name" value="Spore Coat Polysaccharide Biosynthesis Protein SpsA, Chain A"/>
    <property type="match status" value="1"/>
</dbReference>
<dbReference type="HAMAP" id="MF_00057">
    <property type="entry name" value="KdsB"/>
    <property type="match status" value="1"/>
</dbReference>
<dbReference type="InterPro" id="IPR003329">
    <property type="entry name" value="Cytidylyl_trans"/>
</dbReference>
<dbReference type="InterPro" id="IPR004528">
    <property type="entry name" value="KdsB"/>
</dbReference>
<dbReference type="InterPro" id="IPR029044">
    <property type="entry name" value="Nucleotide-diphossugar_trans"/>
</dbReference>
<dbReference type="NCBIfam" id="TIGR00466">
    <property type="entry name" value="kdsB"/>
    <property type="match status" value="1"/>
</dbReference>
<dbReference type="NCBIfam" id="NF003950">
    <property type="entry name" value="PRK05450.1-3"/>
    <property type="match status" value="1"/>
</dbReference>
<dbReference type="NCBIfam" id="NF003952">
    <property type="entry name" value="PRK05450.1-5"/>
    <property type="match status" value="1"/>
</dbReference>
<dbReference type="NCBIfam" id="NF009905">
    <property type="entry name" value="PRK13368.1"/>
    <property type="match status" value="1"/>
</dbReference>
<dbReference type="PANTHER" id="PTHR42866">
    <property type="entry name" value="3-DEOXY-MANNO-OCTULOSONATE CYTIDYLYLTRANSFERASE"/>
    <property type="match status" value="1"/>
</dbReference>
<dbReference type="PANTHER" id="PTHR42866:SF2">
    <property type="entry name" value="3-DEOXY-MANNO-OCTULOSONATE CYTIDYLYLTRANSFERASE, MITOCHONDRIAL"/>
    <property type="match status" value="1"/>
</dbReference>
<dbReference type="Pfam" id="PF02348">
    <property type="entry name" value="CTP_transf_3"/>
    <property type="match status" value="1"/>
</dbReference>
<dbReference type="SUPFAM" id="SSF53448">
    <property type="entry name" value="Nucleotide-diphospho-sugar transferases"/>
    <property type="match status" value="1"/>
</dbReference>
<proteinExistence type="inferred from homology"/>
<name>KDSB_SHEPA</name>